<sequence>MTEAQRHQILLDMLAQLGFVTVENVIERLGISPATARRDINKLDESGKLKKVRNGAEAITQQRPRWTPMNLHQAQNHDEKVRIAKAASQLVNPGESVVINCGSTAFLLGREMCGKPVQIITNYLPLANYLIDQEHDSVIIMGGQYNKSQSITLSPQGSENSLYAGHWMFTSGKGLTADGLYKTDMLTAMAEQKMLSVVGKLVALVDSSKIGERAGMLFSRADQIAMLITGKNANPQVLQQLEAQGVSILRV</sequence>
<feature type="chain" id="PRO_1000190473" description="HTH-type transcriptional regulator UlaR">
    <location>
        <begin position="1"/>
        <end position="251"/>
    </location>
</feature>
<feature type="domain" description="HTH deoR-type" evidence="1">
    <location>
        <begin position="3"/>
        <end position="58"/>
    </location>
</feature>
<feature type="DNA-binding region" description="H-T-H motif" evidence="1">
    <location>
        <begin position="20"/>
        <end position="39"/>
    </location>
</feature>
<reference key="1">
    <citation type="journal article" date="2008" name="Genome Res.">
        <title>Comparative genome analysis of Salmonella enteritidis PT4 and Salmonella gallinarum 287/91 provides insights into evolutionary and host adaptation pathways.</title>
        <authorList>
            <person name="Thomson N.R."/>
            <person name="Clayton D.J."/>
            <person name="Windhorst D."/>
            <person name="Vernikos G."/>
            <person name="Davidson S."/>
            <person name="Churcher C."/>
            <person name="Quail M.A."/>
            <person name="Stevens M."/>
            <person name="Jones M.A."/>
            <person name="Watson M."/>
            <person name="Barron A."/>
            <person name="Layton A."/>
            <person name="Pickard D."/>
            <person name="Kingsley R.A."/>
            <person name="Bignell A."/>
            <person name="Clark L."/>
            <person name="Harris B."/>
            <person name="Ormond D."/>
            <person name="Abdellah Z."/>
            <person name="Brooks K."/>
            <person name="Cherevach I."/>
            <person name="Chillingworth T."/>
            <person name="Woodward J."/>
            <person name="Norberczak H."/>
            <person name="Lord A."/>
            <person name="Arrowsmith C."/>
            <person name="Jagels K."/>
            <person name="Moule S."/>
            <person name="Mungall K."/>
            <person name="Saunders M."/>
            <person name="Whitehead S."/>
            <person name="Chabalgoity J.A."/>
            <person name="Maskell D."/>
            <person name="Humphreys T."/>
            <person name="Roberts M."/>
            <person name="Barrow P.A."/>
            <person name="Dougan G."/>
            <person name="Parkhill J."/>
        </authorList>
    </citation>
    <scope>NUCLEOTIDE SEQUENCE [LARGE SCALE GENOMIC DNA]</scope>
    <source>
        <strain>P125109</strain>
    </source>
</reference>
<accession>B5R0Q8</accession>
<name>ULAR_SALEP</name>
<gene>
    <name evidence="1" type="primary">ulaR</name>
    <name type="ordered locus">SEN4147</name>
</gene>
<proteinExistence type="inferred from homology"/>
<keyword id="KW-0963">Cytoplasm</keyword>
<keyword id="KW-0238">DNA-binding</keyword>
<keyword id="KW-0678">Repressor</keyword>
<keyword id="KW-0804">Transcription</keyword>
<keyword id="KW-0805">Transcription regulation</keyword>
<dbReference type="EMBL" id="AM933172">
    <property type="protein sequence ID" value="CAR35707.1"/>
    <property type="molecule type" value="Genomic_DNA"/>
</dbReference>
<dbReference type="RefSeq" id="WP_000133618.1">
    <property type="nucleotide sequence ID" value="NC_011294.1"/>
</dbReference>
<dbReference type="SMR" id="B5R0Q8"/>
<dbReference type="KEGG" id="set:SEN4147"/>
<dbReference type="HOGENOM" id="CLU_060699_3_2_6"/>
<dbReference type="Proteomes" id="UP000000613">
    <property type="component" value="Chromosome"/>
</dbReference>
<dbReference type="GO" id="GO:0005737">
    <property type="term" value="C:cytoplasm"/>
    <property type="evidence" value="ECO:0007669"/>
    <property type="project" value="UniProtKB-SubCell"/>
</dbReference>
<dbReference type="GO" id="GO:0003677">
    <property type="term" value="F:DNA binding"/>
    <property type="evidence" value="ECO:0007669"/>
    <property type="project" value="UniProtKB-KW"/>
</dbReference>
<dbReference type="GO" id="GO:0003700">
    <property type="term" value="F:DNA-binding transcription factor activity"/>
    <property type="evidence" value="ECO:0007669"/>
    <property type="project" value="InterPro"/>
</dbReference>
<dbReference type="GO" id="GO:0045892">
    <property type="term" value="P:negative regulation of DNA-templated transcription"/>
    <property type="evidence" value="ECO:0007669"/>
    <property type="project" value="UniProtKB-UniRule"/>
</dbReference>
<dbReference type="FunFam" id="1.10.10.10:FF:000160">
    <property type="entry name" value="HTH-type transcriptional regulator UlaR"/>
    <property type="match status" value="1"/>
</dbReference>
<dbReference type="Gene3D" id="1.10.10.10">
    <property type="entry name" value="Winged helix-like DNA-binding domain superfamily/Winged helix DNA-binding domain"/>
    <property type="match status" value="1"/>
</dbReference>
<dbReference type="HAMAP" id="MF_01563">
    <property type="entry name" value="HTH_type_UlaR"/>
    <property type="match status" value="1"/>
</dbReference>
<dbReference type="InterPro" id="IPR050313">
    <property type="entry name" value="Carb_Metab_HTH_regulators"/>
</dbReference>
<dbReference type="InterPro" id="IPR014036">
    <property type="entry name" value="DeoR-like_C"/>
</dbReference>
<dbReference type="InterPro" id="IPR001034">
    <property type="entry name" value="DeoR_HTH"/>
</dbReference>
<dbReference type="InterPro" id="IPR037171">
    <property type="entry name" value="NagB/RpiA_transferase-like"/>
</dbReference>
<dbReference type="InterPro" id="IPR018356">
    <property type="entry name" value="Tscrpt_reg_HTH_DeoR_CS"/>
</dbReference>
<dbReference type="InterPro" id="IPR023711">
    <property type="entry name" value="Tscrpt_reg_HTH_UlaR"/>
</dbReference>
<dbReference type="InterPro" id="IPR036388">
    <property type="entry name" value="WH-like_DNA-bd_sf"/>
</dbReference>
<dbReference type="InterPro" id="IPR036390">
    <property type="entry name" value="WH_DNA-bd_sf"/>
</dbReference>
<dbReference type="NCBIfam" id="NF010034">
    <property type="entry name" value="PRK13509.1"/>
    <property type="match status" value="1"/>
</dbReference>
<dbReference type="PANTHER" id="PTHR30363">
    <property type="entry name" value="HTH-TYPE TRANSCRIPTIONAL REGULATOR SRLR-RELATED"/>
    <property type="match status" value="1"/>
</dbReference>
<dbReference type="PANTHER" id="PTHR30363:SF55">
    <property type="entry name" value="HTH-TYPE TRANSCRIPTIONAL REGULATOR ULAR"/>
    <property type="match status" value="1"/>
</dbReference>
<dbReference type="Pfam" id="PF00455">
    <property type="entry name" value="DeoRC"/>
    <property type="match status" value="1"/>
</dbReference>
<dbReference type="Pfam" id="PF08220">
    <property type="entry name" value="HTH_DeoR"/>
    <property type="match status" value="1"/>
</dbReference>
<dbReference type="PRINTS" id="PR00037">
    <property type="entry name" value="HTHLACR"/>
</dbReference>
<dbReference type="SMART" id="SM01134">
    <property type="entry name" value="DeoRC"/>
    <property type="match status" value="1"/>
</dbReference>
<dbReference type="SMART" id="SM00420">
    <property type="entry name" value="HTH_DEOR"/>
    <property type="match status" value="1"/>
</dbReference>
<dbReference type="SUPFAM" id="SSF100950">
    <property type="entry name" value="NagB/RpiA/CoA transferase-like"/>
    <property type="match status" value="1"/>
</dbReference>
<dbReference type="SUPFAM" id="SSF46785">
    <property type="entry name" value="Winged helix' DNA-binding domain"/>
    <property type="match status" value="1"/>
</dbReference>
<dbReference type="PROSITE" id="PS00894">
    <property type="entry name" value="HTH_DEOR_1"/>
    <property type="match status" value="1"/>
</dbReference>
<dbReference type="PROSITE" id="PS51000">
    <property type="entry name" value="HTH_DEOR_2"/>
    <property type="match status" value="1"/>
</dbReference>
<organism>
    <name type="scientific">Salmonella enteritidis PT4 (strain P125109)</name>
    <dbReference type="NCBI Taxonomy" id="550537"/>
    <lineage>
        <taxon>Bacteria</taxon>
        <taxon>Pseudomonadati</taxon>
        <taxon>Pseudomonadota</taxon>
        <taxon>Gammaproteobacteria</taxon>
        <taxon>Enterobacterales</taxon>
        <taxon>Enterobacteriaceae</taxon>
        <taxon>Salmonella</taxon>
    </lineage>
</organism>
<protein>
    <recommendedName>
        <fullName evidence="1">HTH-type transcriptional regulator UlaR</fullName>
    </recommendedName>
</protein>
<comment type="function">
    <text evidence="1">Represses ulaG and the ulaABCDEF operon.</text>
</comment>
<comment type="subcellular location">
    <subcellularLocation>
        <location evidence="1">Cytoplasm</location>
    </subcellularLocation>
</comment>
<evidence type="ECO:0000255" key="1">
    <source>
        <dbReference type="HAMAP-Rule" id="MF_01563"/>
    </source>
</evidence>